<name>RIBL_PICTO</name>
<protein>
    <recommendedName>
        <fullName evidence="1">FAD synthase</fullName>
        <ecNumber evidence="1">2.7.7.2</ecNumber>
    </recommendedName>
    <alternativeName>
        <fullName evidence="1">FMN adenylyltransferase</fullName>
    </alternativeName>
    <alternativeName>
        <fullName evidence="1">Flavin adenine dinucleotide synthase</fullName>
    </alternativeName>
</protein>
<feature type="chain" id="PRO_0000406278" description="FAD synthase">
    <location>
        <begin position="1"/>
        <end position="139"/>
    </location>
</feature>
<feature type="binding site" evidence="1">
    <location>
        <begin position="8"/>
        <end position="9"/>
    </location>
    <ligand>
        <name>ATP</name>
        <dbReference type="ChEBI" id="CHEBI:30616"/>
    </ligand>
</feature>
<feature type="binding site" evidence="1">
    <location>
        <begin position="13"/>
        <end position="16"/>
    </location>
    <ligand>
        <name>ATP</name>
        <dbReference type="ChEBI" id="CHEBI:30616"/>
    </ligand>
</feature>
<feature type="binding site" evidence="1">
    <location>
        <position position="92"/>
    </location>
    <ligand>
        <name>ATP</name>
        <dbReference type="ChEBI" id="CHEBI:30616"/>
    </ligand>
</feature>
<feature type="binding site" evidence="1">
    <location>
        <position position="119"/>
    </location>
    <ligand>
        <name>ATP</name>
        <dbReference type="ChEBI" id="CHEBI:30616"/>
    </ligand>
</feature>
<organism>
    <name type="scientific">Picrophilus torridus (strain ATCC 700027 / DSM 9790 / JCM 10055 / NBRC 100828 / KAW 2/3)</name>
    <dbReference type="NCBI Taxonomy" id="1122961"/>
    <lineage>
        <taxon>Archaea</taxon>
        <taxon>Methanobacteriati</taxon>
        <taxon>Thermoplasmatota</taxon>
        <taxon>Thermoplasmata</taxon>
        <taxon>Thermoplasmatales</taxon>
        <taxon>Picrophilaceae</taxon>
        <taxon>Picrophilus</taxon>
    </lineage>
</organism>
<proteinExistence type="inferred from homology"/>
<sequence length="139" mass="16169">MKIMATGVFDILHPGHIHYLSESKKLGDYLIVIIATDKTAGSHGKKLIFNEEQRRFMVSQLRMVDEAIIGHEDDIFKTVYEVRPDIITLGYDQHFNDSEIEKKCRDLGLNTRVVRISKYDGEIKSSSDIRRRIIELYNR</sequence>
<dbReference type="EC" id="2.7.7.2" evidence="1"/>
<dbReference type="EMBL" id="AE017261">
    <property type="protein sequence ID" value="AAT43595.1"/>
    <property type="molecule type" value="Genomic_DNA"/>
</dbReference>
<dbReference type="RefSeq" id="WP_011177811.1">
    <property type="nucleotide sequence ID" value="NC_005877.1"/>
</dbReference>
<dbReference type="SMR" id="Q6L0A7"/>
<dbReference type="FunCoup" id="Q6L0A7">
    <property type="interactions" value="6"/>
</dbReference>
<dbReference type="STRING" id="263820.PTO1010"/>
<dbReference type="PaxDb" id="263820-PTO1010"/>
<dbReference type="GeneID" id="2844853"/>
<dbReference type="KEGG" id="pto:PTO1010"/>
<dbReference type="eggNOG" id="arCOG01222">
    <property type="taxonomic scope" value="Archaea"/>
</dbReference>
<dbReference type="HOGENOM" id="CLU_034585_2_1_2"/>
<dbReference type="InParanoid" id="Q6L0A7"/>
<dbReference type="OrthoDB" id="1912at2157"/>
<dbReference type="UniPathway" id="UPA00277">
    <property type="reaction ID" value="UER00407"/>
</dbReference>
<dbReference type="Proteomes" id="UP000000438">
    <property type="component" value="Chromosome"/>
</dbReference>
<dbReference type="GO" id="GO:0005524">
    <property type="term" value="F:ATP binding"/>
    <property type="evidence" value="ECO:0007669"/>
    <property type="project" value="UniProtKB-UniRule"/>
</dbReference>
<dbReference type="GO" id="GO:0003919">
    <property type="term" value="F:FMN adenylyltransferase activity"/>
    <property type="evidence" value="ECO:0007669"/>
    <property type="project" value="UniProtKB-UniRule"/>
</dbReference>
<dbReference type="GO" id="GO:0006747">
    <property type="term" value="P:FAD biosynthetic process"/>
    <property type="evidence" value="ECO:0007669"/>
    <property type="project" value="UniProtKB-UniRule"/>
</dbReference>
<dbReference type="GO" id="GO:0046444">
    <property type="term" value="P:FMN metabolic process"/>
    <property type="evidence" value="ECO:0007669"/>
    <property type="project" value="UniProtKB-UniRule"/>
</dbReference>
<dbReference type="Gene3D" id="3.40.50.620">
    <property type="entry name" value="HUPs"/>
    <property type="match status" value="1"/>
</dbReference>
<dbReference type="HAMAP" id="MF_02115">
    <property type="entry name" value="FAD_synth_arch"/>
    <property type="match status" value="1"/>
</dbReference>
<dbReference type="InterPro" id="IPR050385">
    <property type="entry name" value="Archaeal_FAD_synthase"/>
</dbReference>
<dbReference type="InterPro" id="IPR004821">
    <property type="entry name" value="Cyt_trans-like"/>
</dbReference>
<dbReference type="InterPro" id="IPR024902">
    <property type="entry name" value="FAD_synth_RibL"/>
</dbReference>
<dbReference type="InterPro" id="IPR014729">
    <property type="entry name" value="Rossmann-like_a/b/a_fold"/>
</dbReference>
<dbReference type="NCBIfam" id="TIGR00125">
    <property type="entry name" value="cyt_tran_rel"/>
    <property type="match status" value="1"/>
</dbReference>
<dbReference type="PANTHER" id="PTHR43793">
    <property type="entry name" value="FAD SYNTHASE"/>
    <property type="match status" value="1"/>
</dbReference>
<dbReference type="PANTHER" id="PTHR43793:SF1">
    <property type="entry name" value="FAD SYNTHASE"/>
    <property type="match status" value="1"/>
</dbReference>
<dbReference type="Pfam" id="PF01467">
    <property type="entry name" value="CTP_transf_like"/>
    <property type="match status" value="1"/>
</dbReference>
<dbReference type="SUPFAM" id="SSF52374">
    <property type="entry name" value="Nucleotidylyl transferase"/>
    <property type="match status" value="1"/>
</dbReference>
<gene>
    <name evidence="1" type="primary">ribL</name>
    <name type="ordered locus">PTO1010</name>
</gene>
<evidence type="ECO:0000255" key="1">
    <source>
        <dbReference type="HAMAP-Rule" id="MF_02115"/>
    </source>
</evidence>
<reference key="1">
    <citation type="journal article" date="2004" name="Proc. Natl. Acad. Sci. U.S.A.">
        <title>Genome sequence of Picrophilus torridus and its implications for life around pH 0.</title>
        <authorList>
            <person name="Fuetterer O."/>
            <person name="Angelov A."/>
            <person name="Liesegang H."/>
            <person name="Gottschalk G."/>
            <person name="Schleper C."/>
            <person name="Schepers B."/>
            <person name="Dock C."/>
            <person name="Antranikian G."/>
            <person name="Liebl W."/>
        </authorList>
    </citation>
    <scope>NUCLEOTIDE SEQUENCE [LARGE SCALE GENOMIC DNA]</scope>
    <source>
        <strain>ATCC 700027 / DSM 9790 / JCM 10055 / NBRC 100828 / KAW 2/3</strain>
    </source>
</reference>
<keyword id="KW-0067">ATP-binding</keyword>
<keyword id="KW-0274">FAD</keyword>
<keyword id="KW-0285">Flavoprotein</keyword>
<keyword id="KW-0288">FMN</keyword>
<keyword id="KW-0547">Nucleotide-binding</keyword>
<keyword id="KW-0548">Nucleotidyltransferase</keyword>
<keyword id="KW-0808">Transferase</keyword>
<comment type="function">
    <text evidence="1">Catalyzes the transfer of the AMP portion of ATP to flavin mononucleotide (FMN) to produce flavin adenine dinucleotide (FAD) coenzyme.</text>
</comment>
<comment type="catalytic activity">
    <reaction evidence="1">
        <text>FMN + ATP + H(+) = FAD + diphosphate</text>
        <dbReference type="Rhea" id="RHEA:17237"/>
        <dbReference type="ChEBI" id="CHEBI:15378"/>
        <dbReference type="ChEBI" id="CHEBI:30616"/>
        <dbReference type="ChEBI" id="CHEBI:33019"/>
        <dbReference type="ChEBI" id="CHEBI:57692"/>
        <dbReference type="ChEBI" id="CHEBI:58210"/>
        <dbReference type="EC" id="2.7.7.2"/>
    </reaction>
</comment>
<comment type="cofactor">
    <cofactor evidence="1">
        <name>a divalent metal cation</name>
        <dbReference type="ChEBI" id="CHEBI:60240"/>
    </cofactor>
</comment>
<comment type="pathway">
    <text evidence="1">Cofactor biosynthesis; FAD biosynthesis; FAD from FMN: step 1/1.</text>
</comment>
<comment type="subunit">
    <text evidence="1">Homodimer.</text>
</comment>
<comment type="similarity">
    <text evidence="1">Belongs to the archaeal FAD synthase family.</text>
</comment>
<accession>Q6L0A7</accession>